<dbReference type="EC" id="6.1.1.3" evidence="1"/>
<dbReference type="EMBL" id="CP000919">
    <property type="protein sequence ID" value="ACO19697.1"/>
    <property type="molecule type" value="Genomic_DNA"/>
</dbReference>
<dbReference type="RefSeq" id="WP_000608358.1">
    <property type="nucleotide sequence ID" value="NC_012466.1"/>
</dbReference>
<dbReference type="SMR" id="C1CFK0"/>
<dbReference type="KEGG" id="sjj:SPJ_1524"/>
<dbReference type="HOGENOM" id="CLU_008554_3_2_9"/>
<dbReference type="Proteomes" id="UP000002206">
    <property type="component" value="Chromosome"/>
</dbReference>
<dbReference type="GO" id="GO:0005737">
    <property type="term" value="C:cytoplasm"/>
    <property type="evidence" value="ECO:0007669"/>
    <property type="project" value="UniProtKB-SubCell"/>
</dbReference>
<dbReference type="GO" id="GO:0005524">
    <property type="term" value="F:ATP binding"/>
    <property type="evidence" value="ECO:0007669"/>
    <property type="project" value="UniProtKB-UniRule"/>
</dbReference>
<dbReference type="GO" id="GO:0140096">
    <property type="term" value="F:catalytic activity, acting on a protein"/>
    <property type="evidence" value="ECO:0007669"/>
    <property type="project" value="UniProtKB-ARBA"/>
</dbReference>
<dbReference type="GO" id="GO:0046872">
    <property type="term" value="F:metal ion binding"/>
    <property type="evidence" value="ECO:0007669"/>
    <property type="project" value="UniProtKB-KW"/>
</dbReference>
<dbReference type="GO" id="GO:0004829">
    <property type="term" value="F:threonine-tRNA ligase activity"/>
    <property type="evidence" value="ECO:0007669"/>
    <property type="project" value="UniProtKB-UniRule"/>
</dbReference>
<dbReference type="GO" id="GO:0016740">
    <property type="term" value="F:transferase activity"/>
    <property type="evidence" value="ECO:0007669"/>
    <property type="project" value="UniProtKB-ARBA"/>
</dbReference>
<dbReference type="GO" id="GO:0000049">
    <property type="term" value="F:tRNA binding"/>
    <property type="evidence" value="ECO:0007669"/>
    <property type="project" value="UniProtKB-KW"/>
</dbReference>
<dbReference type="GO" id="GO:0006435">
    <property type="term" value="P:threonyl-tRNA aminoacylation"/>
    <property type="evidence" value="ECO:0007669"/>
    <property type="project" value="UniProtKB-UniRule"/>
</dbReference>
<dbReference type="CDD" id="cd01667">
    <property type="entry name" value="TGS_ThrRS"/>
    <property type="match status" value="1"/>
</dbReference>
<dbReference type="CDD" id="cd00860">
    <property type="entry name" value="ThrRS_anticodon"/>
    <property type="match status" value="1"/>
</dbReference>
<dbReference type="CDD" id="cd00771">
    <property type="entry name" value="ThrRS_core"/>
    <property type="match status" value="1"/>
</dbReference>
<dbReference type="FunFam" id="3.10.20.30:FF:000005">
    <property type="entry name" value="Threonine--tRNA ligase"/>
    <property type="match status" value="1"/>
</dbReference>
<dbReference type="FunFam" id="3.30.54.20:FF:000002">
    <property type="entry name" value="Threonine--tRNA ligase"/>
    <property type="match status" value="1"/>
</dbReference>
<dbReference type="FunFam" id="3.30.930.10:FF:000002">
    <property type="entry name" value="Threonine--tRNA ligase"/>
    <property type="match status" value="1"/>
</dbReference>
<dbReference type="FunFam" id="3.40.50.800:FF:000001">
    <property type="entry name" value="Threonine--tRNA ligase"/>
    <property type="match status" value="1"/>
</dbReference>
<dbReference type="FunFam" id="3.30.980.10:FF:000005">
    <property type="entry name" value="Threonyl-tRNA synthetase, mitochondrial"/>
    <property type="match status" value="1"/>
</dbReference>
<dbReference type="Gene3D" id="3.10.20.30">
    <property type="match status" value="1"/>
</dbReference>
<dbReference type="Gene3D" id="3.30.54.20">
    <property type="match status" value="1"/>
</dbReference>
<dbReference type="Gene3D" id="3.40.50.800">
    <property type="entry name" value="Anticodon-binding domain"/>
    <property type="match status" value="1"/>
</dbReference>
<dbReference type="Gene3D" id="3.30.930.10">
    <property type="entry name" value="Bira Bifunctional Protein, Domain 2"/>
    <property type="match status" value="1"/>
</dbReference>
<dbReference type="Gene3D" id="3.30.980.10">
    <property type="entry name" value="Threonyl-trna Synthetase, Chain A, domain 2"/>
    <property type="match status" value="1"/>
</dbReference>
<dbReference type="HAMAP" id="MF_00184">
    <property type="entry name" value="Thr_tRNA_synth"/>
    <property type="match status" value="1"/>
</dbReference>
<dbReference type="InterPro" id="IPR002314">
    <property type="entry name" value="aa-tRNA-synt_IIb"/>
</dbReference>
<dbReference type="InterPro" id="IPR006195">
    <property type="entry name" value="aa-tRNA-synth_II"/>
</dbReference>
<dbReference type="InterPro" id="IPR045864">
    <property type="entry name" value="aa-tRNA-synth_II/BPL/LPL"/>
</dbReference>
<dbReference type="InterPro" id="IPR004154">
    <property type="entry name" value="Anticodon-bd"/>
</dbReference>
<dbReference type="InterPro" id="IPR036621">
    <property type="entry name" value="Anticodon-bd_dom_sf"/>
</dbReference>
<dbReference type="InterPro" id="IPR012675">
    <property type="entry name" value="Beta-grasp_dom_sf"/>
</dbReference>
<dbReference type="InterPro" id="IPR004095">
    <property type="entry name" value="TGS"/>
</dbReference>
<dbReference type="InterPro" id="IPR012676">
    <property type="entry name" value="TGS-like"/>
</dbReference>
<dbReference type="InterPro" id="IPR002320">
    <property type="entry name" value="Thr-tRNA-ligase_IIa"/>
</dbReference>
<dbReference type="InterPro" id="IPR018163">
    <property type="entry name" value="Thr/Ala-tRNA-synth_IIc_edit"/>
</dbReference>
<dbReference type="InterPro" id="IPR047246">
    <property type="entry name" value="ThrRS_anticodon"/>
</dbReference>
<dbReference type="InterPro" id="IPR033728">
    <property type="entry name" value="ThrRS_core"/>
</dbReference>
<dbReference type="InterPro" id="IPR012947">
    <property type="entry name" value="tRNA_SAD"/>
</dbReference>
<dbReference type="NCBIfam" id="TIGR00418">
    <property type="entry name" value="thrS"/>
    <property type="match status" value="1"/>
</dbReference>
<dbReference type="PANTHER" id="PTHR11451:SF56">
    <property type="entry name" value="THREONINE--TRNA LIGASE 1"/>
    <property type="match status" value="1"/>
</dbReference>
<dbReference type="PANTHER" id="PTHR11451">
    <property type="entry name" value="THREONINE-TRNA LIGASE"/>
    <property type="match status" value="1"/>
</dbReference>
<dbReference type="Pfam" id="PF03129">
    <property type="entry name" value="HGTP_anticodon"/>
    <property type="match status" value="1"/>
</dbReference>
<dbReference type="Pfam" id="PF02824">
    <property type="entry name" value="TGS"/>
    <property type="match status" value="1"/>
</dbReference>
<dbReference type="Pfam" id="PF00587">
    <property type="entry name" value="tRNA-synt_2b"/>
    <property type="match status" value="1"/>
</dbReference>
<dbReference type="Pfam" id="PF07973">
    <property type="entry name" value="tRNA_SAD"/>
    <property type="match status" value="1"/>
</dbReference>
<dbReference type="PRINTS" id="PR01047">
    <property type="entry name" value="TRNASYNTHTHR"/>
</dbReference>
<dbReference type="SMART" id="SM00863">
    <property type="entry name" value="tRNA_SAD"/>
    <property type="match status" value="1"/>
</dbReference>
<dbReference type="SUPFAM" id="SSF52954">
    <property type="entry name" value="Class II aaRS ABD-related"/>
    <property type="match status" value="1"/>
</dbReference>
<dbReference type="SUPFAM" id="SSF55681">
    <property type="entry name" value="Class II aaRS and biotin synthetases"/>
    <property type="match status" value="1"/>
</dbReference>
<dbReference type="SUPFAM" id="SSF81271">
    <property type="entry name" value="TGS-like"/>
    <property type="match status" value="1"/>
</dbReference>
<dbReference type="SUPFAM" id="SSF55186">
    <property type="entry name" value="ThrRS/AlaRS common domain"/>
    <property type="match status" value="1"/>
</dbReference>
<dbReference type="PROSITE" id="PS50862">
    <property type="entry name" value="AA_TRNA_LIGASE_II"/>
    <property type="match status" value="1"/>
</dbReference>
<dbReference type="PROSITE" id="PS51880">
    <property type="entry name" value="TGS"/>
    <property type="match status" value="1"/>
</dbReference>
<reference key="1">
    <citation type="journal article" date="2010" name="Genome Biol.">
        <title>Structure and dynamics of the pan-genome of Streptococcus pneumoniae and closely related species.</title>
        <authorList>
            <person name="Donati C."/>
            <person name="Hiller N.L."/>
            <person name="Tettelin H."/>
            <person name="Muzzi A."/>
            <person name="Croucher N.J."/>
            <person name="Angiuoli S.V."/>
            <person name="Oggioni M."/>
            <person name="Dunning Hotopp J.C."/>
            <person name="Hu F.Z."/>
            <person name="Riley D.R."/>
            <person name="Covacci A."/>
            <person name="Mitchell T.J."/>
            <person name="Bentley S.D."/>
            <person name="Kilian M."/>
            <person name="Ehrlich G.D."/>
            <person name="Rappuoli R."/>
            <person name="Moxon E.R."/>
            <person name="Masignani V."/>
        </authorList>
    </citation>
    <scope>NUCLEOTIDE SEQUENCE [LARGE SCALE GENOMIC DNA]</scope>
    <source>
        <strain>JJA</strain>
    </source>
</reference>
<evidence type="ECO:0000255" key="1">
    <source>
        <dbReference type="HAMAP-Rule" id="MF_00184"/>
    </source>
</evidence>
<evidence type="ECO:0000255" key="2">
    <source>
        <dbReference type="PROSITE-ProRule" id="PRU01228"/>
    </source>
</evidence>
<protein>
    <recommendedName>
        <fullName evidence="1">Threonine--tRNA ligase</fullName>
        <ecNumber evidence="1">6.1.1.3</ecNumber>
    </recommendedName>
    <alternativeName>
        <fullName evidence="1">Threonyl-tRNA synthetase</fullName>
        <shortName evidence="1">ThrRS</shortName>
    </alternativeName>
</protein>
<gene>
    <name evidence="1" type="primary">thrS</name>
    <name type="ordered locus">SPJ_1524</name>
</gene>
<sequence length="647" mass="74697">MINITFPDGAVREFESGVTTFEIAQSISNSLAKKALAGKFNGKLIDTTRAITEDGSIEIVTPDHEDALPILRHSAAHLFAQAARRLFPDIHLGVGPAIEDGFYYDTDNTAGQISNEDLPRIEEEMQKIVKENFPSIREEVTKDEAREIFKNDPYKLELIEEHSEDEGGLTIYRQGEYVDLCRGPHVPSTGRIQIFHLLHVAGAYWRGNSDNAMMQRIYGTAWFEKKDLKNYLQMREEAKERDHRKLGKELDLFMISQEVGQGLPFWLPNGATIRRELERYIVNKELASGYQHVYTPPLASVELYKTSGHWDHYQEDMFPTMDMGDGEEFVLRPMNCPHHIQVFKHHVHSYRELPIRIAEIGMMHRYEKSGALTGLQRVREMSLNDGHLFVTPEQIQEEFQRALQLIIDVYEDFNLTDYRFRLSLRDPQDTHKYFDNDEMWENAQTMLRAALDEMGVDYFEAEGEAAFYGPKLDIQIKTALGKEETLSTIQLDFLLPERFDLKYIGADGEDHRPVMIHRGVISTMERFTAILIENYKGAFPTWLAPHQVTLIPVSNEKHVDYAWEVAKKLRDRGVRADVDERNEKMQFKIRASQTSKIPYQLIVGDKEMEDETVNVRRYGQKETQTVSVDNFVQAILADIANKSRVEK</sequence>
<accession>C1CFK0</accession>
<feature type="chain" id="PRO_1000199571" description="Threonine--tRNA ligase">
    <location>
        <begin position="1"/>
        <end position="647"/>
    </location>
</feature>
<feature type="domain" description="TGS" evidence="2">
    <location>
        <begin position="1"/>
        <end position="61"/>
    </location>
</feature>
<feature type="region of interest" description="Catalytic" evidence="1">
    <location>
        <begin position="242"/>
        <end position="540"/>
    </location>
</feature>
<feature type="binding site" evidence="1">
    <location>
        <position position="336"/>
    </location>
    <ligand>
        <name>Zn(2+)</name>
        <dbReference type="ChEBI" id="CHEBI:29105"/>
    </ligand>
</feature>
<feature type="binding site" evidence="1">
    <location>
        <position position="387"/>
    </location>
    <ligand>
        <name>Zn(2+)</name>
        <dbReference type="ChEBI" id="CHEBI:29105"/>
    </ligand>
</feature>
<feature type="binding site" evidence="1">
    <location>
        <position position="517"/>
    </location>
    <ligand>
        <name>Zn(2+)</name>
        <dbReference type="ChEBI" id="CHEBI:29105"/>
    </ligand>
</feature>
<proteinExistence type="inferred from homology"/>
<organism>
    <name type="scientific">Streptococcus pneumoniae (strain JJA)</name>
    <dbReference type="NCBI Taxonomy" id="488222"/>
    <lineage>
        <taxon>Bacteria</taxon>
        <taxon>Bacillati</taxon>
        <taxon>Bacillota</taxon>
        <taxon>Bacilli</taxon>
        <taxon>Lactobacillales</taxon>
        <taxon>Streptococcaceae</taxon>
        <taxon>Streptococcus</taxon>
    </lineage>
</organism>
<name>SYT_STRZJ</name>
<comment type="function">
    <text evidence="1">Catalyzes the attachment of threonine to tRNA(Thr) in a two-step reaction: L-threonine is first activated by ATP to form Thr-AMP and then transferred to the acceptor end of tRNA(Thr). Also edits incorrectly charged L-seryl-tRNA(Thr).</text>
</comment>
<comment type="catalytic activity">
    <reaction evidence="1">
        <text>tRNA(Thr) + L-threonine + ATP = L-threonyl-tRNA(Thr) + AMP + diphosphate + H(+)</text>
        <dbReference type="Rhea" id="RHEA:24624"/>
        <dbReference type="Rhea" id="RHEA-COMP:9670"/>
        <dbReference type="Rhea" id="RHEA-COMP:9704"/>
        <dbReference type="ChEBI" id="CHEBI:15378"/>
        <dbReference type="ChEBI" id="CHEBI:30616"/>
        <dbReference type="ChEBI" id="CHEBI:33019"/>
        <dbReference type="ChEBI" id="CHEBI:57926"/>
        <dbReference type="ChEBI" id="CHEBI:78442"/>
        <dbReference type="ChEBI" id="CHEBI:78534"/>
        <dbReference type="ChEBI" id="CHEBI:456215"/>
        <dbReference type="EC" id="6.1.1.3"/>
    </reaction>
</comment>
<comment type="cofactor">
    <cofactor evidence="1">
        <name>Zn(2+)</name>
        <dbReference type="ChEBI" id="CHEBI:29105"/>
    </cofactor>
    <text evidence="1">Binds 1 zinc ion per subunit.</text>
</comment>
<comment type="subunit">
    <text evidence="1">Homodimer.</text>
</comment>
<comment type="subcellular location">
    <subcellularLocation>
        <location evidence="1">Cytoplasm</location>
    </subcellularLocation>
</comment>
<comment type="similarity">
    <text evidence="1">Belongs to the class-II aminoacyl-tRNA synthetase family.</text>
</comment>
<keyword id="KW-0030">Aminoacyl-tRNA synthetase</keyword>
<keyword id="KW-0067">ATP-binding</keyword>
<keyword id="KW-0963">Cytoplasm</keyword>
<keyword id="KW-0436">Ligase</keyword>
<keyword id="KW-0479">Metal-binding</keyword>
<keyword id="KW-0547">Nucleotide-binding</keyword>
<keyword id="KW-0648">Protein biosynthesis</keyword>
<keyword id="KW-0694">RNA-binding</keyword>
<keyword id="KW-0820">tRNA-binding</keyword>
<keyword id="KW-0862">Zinc</keyword>